<gene>
    <name evidence="1" type="primary">mapB</name>
    <name type="synonym">yflG</name>
    <name type="ordered locus">BSU07690</name>
</gene>
<proteinExistence type="evidence at protein level"/>
<evidence type="ECO:0000255" key="1">
    <source>
        <dbReference type="HAMAP-Rule" id="MF_01974"/>
    </source>
</evidence>
<evidence type="ECO:0000269" key="2">
    <source>
    </source>
</evidence>
<protein>
    <recommendedName>
        <fullName evidence="1">Methionine aminopeptidase 2</fullName>
        <shortName evidence="1">MAP 2</shortName>
        <shortName evidence="1">MetAP 2</shortName>
        <ecNumber evidence="1">3.4.11.18</ecNumber>
    </recommendedName>
</protein>
<feature type="chain" id="PRO_0000361275" description="Methionine aminopeptidase 2">
    <location>
        <begin position="1"/>
        <end position="249"/>
    </location>
</feature>
<feature type="binding site" evidence="1">
    <location>
        <position position="76"/>
    </location>
    <ligand>
        <name>substrate</name>
    </ligand>
</feature>
<feature type="binding site" evidence="1">
    <location>
        <position position="94"/>
    </location>
    <ligand>
        <name>a divalent metal cation</name>
        <dbReference type="ChEBI" id="CHEBI:60240"/>
        <label>1</label>
    </ligand>
</feature>
<feature type="binding site" evidence="1">
    <location>
        <position position="105"/>
    </location>
    <ligand>
        <name>a divalent metal cation</name>
        <dbReference type="ChEBI" id="CHEBI:60240"/>
        <label>1</label>
    </ligand>
</feature>
<feature type="binding site" evidence="1">
    <location>
        <position position="105"/>
    </location>
    <ligand>
        <name>a divalent metal cation</name>
        <dbReference type="ChEBI" id="CHEBI:60240"/>
        <label>2</label>
        <note>catalytic</note>
    </ligand>
</feature>
<feature type="binding site" evidence="1">
    <location>
        <position position="168"/>
    </location>
    <ligand>
        <name>a divalent metal cation</name>
        <dbReference type="ChEBI" id="CHEBI:60240"/>
        <label>2</label>
        <note>catalytic</note>
    </ligand>
</feature>
<feature type="binding site" evidence="1">
    <location>
        <position position="175"/>
    </location>
    <ligand>
        <name>substrate</name>
    </ligand>
</feature>
<feature type="binding site" evidence="1">
    <location>
        <position position="202"/>
    </location>
    <ligand>
        <name>a divalent metal cation</name>
        <dbReference type="ChEBI" id="CHEBI:60240"/>
        <label>2</label>
        <note>catalytic</note>
    </ligand>
</feature>
<feature type="binding site" evidence="1">
    <location>
        <position position="233"/>
    </location>
    <ligand>
        <name>a divalent metal cation</name>
        <dbReference type="ChEBI" id="CHEBI:60240"/>
        <label>1</label>
    </ligand>
</feature>
<feature type="binding site" evidence="1">
    <location>
        <position position="233"/>
    </location>
    <ligand>
        <name>a divalent metal cation</name>
        <dbReference type="ChEBI" id="CHEBI:60240"/>
        <label>2</label>
        <note>catalytic</note>
    </ligand>
</feature>
<accession>O34484</accession>
<accession>Q79ET8</accession>
<dbReference type="EC" id="3.4.11.18" evidence="1"/>
<dbReference type="EMBL" id="D86417">
    <property type="protein sequence ID" value="BAA22300.1"/>
    <property type="molecule type" value="Genomic_DNA"/>
</dbReference>
<dbReference type="EMBL" id="AL009126">
    <property type="protein sequence ID" value="CAB12598.1"/>
    <property type="molecule type" value="Genomic_DNA"/>
</dbReference>
<dbReference type="PIR" id="E69810">
    <property type="entry name" value="E69810"/>
</dbReference>
<dbReference type="RefSeq" id="NP_388650.1">
    <property type="nucleotide sequence ID" value="NC_000964.3"/>
</dbReference>
<dbReference type="SMR" id="O34484"/>
<dbReference type="FunCoup" id="O34484">
    <property type="interactions" value="48"/>
</dbReference>
<dbReference type="STRING" id="224308.BSU07690"/>
<dbReference type="MEROPS" id="M24.036"/>
<dbReference type="PaxDb" id="224308-BSU07690"/>
<dbReference type="EnsemblBacteria" id="CAB12598">
    <property type="protein sequence ID" value="CAB12598"/>
    <property type="gene ID" value="BSU_07690"/>
</dbReference>
<dbReference type="GeneID" id="936121"/>
<dbReference type="KEGG" id="bsu:BSU07690"/>
<dbReference type="PATRIC" id="fig|224308.179.peg.835"/>
<dbReference type="eggNOG" id="COG0024">
    <property type="taxonomic scope" value="Bacteria"/>
</dbReference>
<dbReference type="InParanoid" id="O34484"/>
<dbReference type="OrthoDB" id="9802055at2"/>
<dbReference type="PhylomeDB" id="O34484"/>
<dbReference type="BioCyc" id="BSUB:BSU07690-MONOMER"/>
<dbReference type="Proteomes" id="UP000001570">
    <property type="component" value="Chromosome"/>
</dbReference>
<dbReference type="GO" id="GO:0005737">
    <property type="term" value="C:cytoplasm"/>
    <property type="evidence" value="ECO:0007669"/>
    <property type="project" value="UniProtKB-SubCell"/>
</dbReference>
<dbReference type="GO" id="GO:0004239">
    <property type="term" value="F:initiator methionyl aminopeptidase activity"/>
    <property type="evidence" value="ECO:0007669"/>
    <property type="project" value="UniProtKB-UniRule"/>
</dbReference>
<dbReference type="GO" id="GO:0046872">
    <property type="term" value="F:metal ion binding"/>
    <property type="evidence" value="ECO:0007669"/>
    <property type="project" value="UniProtKB-UniRule"/>
</dbReference>
<dbReference type="GO" id="GO:0070006">
    <property type="term" value="F:metalloaminopeptidase activity"/>
    <property type="evidence" value="ECO:0000318"/>
    <property type="project" value="GO_Central"/>
</dbReference>
<dbReference type="GO" id="GO:0006508">
    <property type="term" value="P:proteolysis"/>
    <property type="evidence" value="ECO:0007669"/>
    <property type="project" value="UniProtKB-KW"/>
</dbReference>
<dbReference type="CDD" id="cd01086">
    <property type="entry name" value="MetAP1"/>
    <property type="match status" value="1"/>
</dbReference>
<dbReference type="Gene3D" id="3.90.230.10">
    <property type="entry name" value="Creatinase/methionine aminopeptidase superfamily"/>
    <property type="match status" value="1"/>
</dbReference>
<dbReference type="HAMAP" id="MF_01974">
    <property type="entry name" value="MetAP_1"/>
    <property type="match status" value="1"/>
</dbReference>
<dbReference type="InterPro" id="IPR036005">
    <property type="entry name" value="Creatinase/aminopeptidase-like"/>
</dbReference>
<dbReference type="InterPro" id="IPR000994">
    <property type="entry name" value="Pept_M24"/>
</dbReference>
<dbReference type="InterPro" id="IPR001714">
    <property type="entry name" value="Pept_M24_MAP"/>
</dbReference>
<dbReference type="InterPro" id="IPR002467">
    <property type="entry name" value="Pept_M24A_MAP1"/>
</dbReference>
<dbReference type="NCBIfam" id="TIGR00500">
    <property type="entry name" value="met_pdase_I"/>
    <property type="match status" value="1"/>
</dbReference>
<dbReference type="PANTHER" id="PTHR43330">
    <property type="entry name" value="METHIONINE AMINOPEPTIDASE"/>
    <property type="match status" value="1"/>
</dbReference>
<dbReference type="PANTHER" id="PTHR43330:SF13">
    <property type="entry name" value="METHIONINE AMINOPEPTIDASE 2"/>
    <property type="match status" value="1"/>
</dbReference>
<dbReference type="Pfam" id="PF00557">
    <property type="entry name" value="Peptidase_M24"/>
    <property type="match status" value="1"/>
</dbReference>
<dbReference type="PRINTS" id="PR00599">
    <property type="entry name" value="MAPEPTIDASE"/>
</dbReference>
<dbReference type="SUPFAM" id="SSF55920">
    <property type="entry name" value="Creatinase/aminopeptidase"/>
    <property type="match status" value="1"/>
</dbReference>
<name>MAP12_BACSU</name>
<reference key="1">
    <citation type="journal article" date="1997" name="Gene">
        <title>Cloning and sequencing of a 35.7 kb in the 70 degree-73 degree region of the Bacillus subtilis genome reveal genes for a new two-component system, three spore germination proteins, an iron uptake system and a general stress response protein.</title>
        <authorList>
            <person name="Yamamoto H."/>
            <person name="Uchiyama S."/>
            <person name="Nugroho F.A."/>
            <person name="Sekiguchi J."/>
        </authorList>
    </citation>
    <scope>NUCLEOTIDE SEQUENCE [GENOMIC DNA]</scope>
    <source>
        <strain>168 / AC327</strain>
    </source>
</reference>
<reference key="2">
    <citation type="journal article" date="1997" name="Nature">
        <title>The complete genome sequence of the Gram-positive bacterium Bacillus subtilis.</title>
        <authorList>
            <person name="Kunst F."/>
            <person name="Ogasawara N."/>
            <person name="Moszer I."/>
            <person name="Albertini A.M."/>
            <person name="Alloni G."/>
            <person name="Azevedo V."/>
            <person name="Bertero M.G."/>
            <person name="Bessieres P."/>
            <person name="Bolotin A."/>
            <person name="Borchert S."/>
            <person name="Borriss R."/>
            <person name="Boursier L."/>
            <person name="Brans A."/>
            <person name="Braun M."/>
            <person name="Brignell S.C."/>
            <person name="Bron S."/>
            <person name="Brouillet S."/>
            <person name="Bruschi C.V."/>
            <person name="Caldwell B."/>
            <person name="Capuano V."/>
            <person name="Carter N.M."/>
            <person name="Choi S.-K."/>
            <person name="Codani J.-J."/>
            <person name="Connerton I.F."/>
            <person name="Cummings N.J."/>
            <person name="Daniel R.A."/>
            <person name="Denizot F."/>
            <person name="Devine K.M."/>
            <person name="Duesterhoeft A."/>
            <person name="Ehrlich S.D."/>
            <person name="Emmerson P.T."/>
            <person name="Entian K.-D."/>
            <person name="Errington J."/>
            <person name="Fabret C."/>
            <person name="Ferrari E."/>
            <person name="Foulger D."/>
            <person name="Fritz C."/>
            <person name="Fujita M."/>
            <person name="Fujita Y."/>
            <person name="Fuma S."/>
            <person name="Galizzi A."/>
            <person name="Galleron N."/>
            <person name="Ghim S.-Y."/>
            <person name="Glaser P."/>
            <person name="Goffeau A."/>
            <person name="Golightly E.J."/>
            <person name="Grandi G."/>
            <person name="Guiseppi G."/>
            <person name="Guy B.J."/>
            <person name="Haga K."/>
            <person name="Haiech J."/>
            <person name="Harwood C.R."/>
            <person name="Henaut A."/>
            <person name="Hilbert H."/>
            <person name="Holsappel S."/>
            <person name="Hosono S."/>
            <person name="Hullo M.-F."/>
            <person name="Itaya M."/>
            <person name="Jones L.-M."/>
            <person name="Joris B."/>
            <person name="Karamata D."/>
            <person name="Kasahara Y."/>
            <person name="Klaerr-Blanchard M."/>
            <person name="Klein C."/>
            <person name="Kobayashi Y."/>
            <person name="Koetter P."/>
            <person name="Koningstein G."/>
            <person name="Krogh S."/>
            <person name="Kumano M."/>
            <person name="Kurita K."/>
            <person name="Lapidus A."/>
            <person name="Lardinois S."/>
            <person name="Lauber J."/>
            <person name="Lazarevic V."/>
            <person name="Lee S.-M."/>
            <person name="Levine A."/>
            <person name="Liu H."/>
            <person name="Masuda S."/>
            <person name="Mauel C."/>
            <person name="Medigue C."/>
            <person name="Medina N."/>
            <person name="Mellado R.P."/>
            <person name="Mizuno M."/>
            <person name="Moestl D."/>
            <person name="Nakai S."/>
            <person name="Noback M."/>
            <person name="Noone D."/>
            <person name="O'Reilly M."/>
            <person name="Ogawa K."/>
            <person name="Ogiwara A."/>
            <person name="Oudega B."/>
            <person name="Park S.-H."/>
            <person name="Parro V."/>
            <person name="Pohl T.M."/>
            <person name="Portetelle D."/>
            <person name="Porwollik S."/>
            <person name="Prescott A.M."/>
            <person name="Presecan E."/>
            <person name="Pujic P."/>
            <person name="Purnelle B."/>
            <person name="Rapoport G."/>
            <person name="Rey M."/>
            <person name="Reynolds S."/>
            <person name="Rieger M."/>
            <person name="Rivolta C."/>
            <person name="Rocha E."/>
            <person name="Roche B."/>
            <person name="Rose M."/>
            <person name="Sadaie Y."/>
            <person name="Sato T."/>
            <person name="Scanlan E."/>
            <person name="Schleich S."/>
            <person name="Schroeter R."/>
            <person name="Scoffone F."/>
            <person name="Sekiguchi J."/>
            <person name="Sekowska A."/>
            <person name="Seror S.J."/>
            <person name="Serror P."/>
            <person name="Shin B.-S."/>
            <person name="Soldo B."/>
            <person name="Sorokin A."/>
            <person name="Tacconi E."/>
            <person name="Takagi T."/>
            <person name="Takahashi H."/>
            <person name="Takemaru K."/>
            <person name="Takeuchi M."/>
            <person name="Tamakoshi A."/>
            <person name="Tanaka T."/>
            <person name="Terpstra P."/>
            <person name="Tognoni A."/>
            <person name="Tosato V."/>
            <person name="Uchiyama S."/>
            <person name="Vandenbol M."/>
            <person name="Vannier F."/>
            <person name="Vassarotti A."/>
            <person name="Viari A."/>
            <person name="Wambutt R."/>
            <person name="Wedler E."/>
            <person name="Wedler H."/>
            <person name="Weitzenegger T."/>
            <person name="Winters P."/>
            <person name="Wipat A."/>
            <person name="Yamamoto H."/>
            <person name="Yamane K."/>
            <person name="Yasumoto K."/>
            <person name="Yata K."/>
            <person name="Yoshida K."/>
            <person name="Yoshikawa H.-F."/>
            <person name="Zumstein E."/>
            <person name="Yoshikawa H."/>
            <person name="Danchin A."/>
        </authorList>
    </citation>
    <scope>NUCLEOTIDE SEQUENCE [LARGE SCALE GENOMIC DNA]</scope>
    <source>
        <strain>168</strain>
    </source>
</reference>
<reference key="3">
    <citation type="journal article" date="2005" name="BMC Microbiol.">
        <title>The two authentic methionine aminopeptidase genes are differentially expressed in Bacillus subtilis.</title>
        <authorList>
            <person name="You C."/>
            <person name="Lu H."/>
            <person name="Sekowska A."/>
            <person name="Fang G."/>
            <person name="Wang Y."/>
            <person name="Gilles A.-M."/>
            <person name="Danchin A."/>
        </authorList>
    </citation>
    <scope>FUNCTION</scope>
    <scope>MASS SPECTROMETRY</scope>
    <scope>COFACTOR</scope>
    <scope>INDUCTION</scope>
    <scope>SUBCELLULAR LOCATION</scope>
    <source>
        <strain>168</strain>
    </source>
</reference>
<organism>
    <name type="scientific">Bacillus subtilis (strain 168)</name>
    <dbReference type="NCBI Taxonomy" id="224308"/>
    <lineage>
        <taxon>Bacteria</taxon>
        <taxon>Bacillati</taxon>
        <taxon>Bacillota</taxon>
        <taxon>Bacilli</taxon>
        <taxon>Bacillales</taxon>
        <taxon>Bacillaceae</taxon>
        <taxon>Bacillus</taxon>
    </lineage>
</organism>
<keyword id="KW-0031">Aminopeptidase</keyword>
<keyword id="KW-0963">Cytoplasm</keyword>
<keyword id="KW-0378">Hydrolase</keyword>
<keyword id="KW-0479">Metal-binding</keyword>
<keyword id="KW-0645">Protease</keyword>
<keyword id="KW-1185">Reference proteome</keyword>
<sequence length="249" mass="27211">MIVTNDQELEGLKKIGRIVALAREEMKRKAEPGMSTKDLDLIGKAVLDEHGAVSAPEKEYDFPGVTCISVNDEVAHGIPSTSKILKAGDLVNIDISAEFGGFYSDTGISFVLGEGEERLHKLCQCAENAFQKGLQQAKAGKRQNQIGRAVYHEARSQGFTVIKTLTGHGIGRSLHEAPNHIMNYYDPFDNALFKNGTVIALEPFISTKAETIVEAGDGWTFKTPDKSMVAQVEHTIVITKDEPIILTKL</sequence>
<comment type="function">
    <text evidence="1 2">Removes the N-terminal methionine from nascent proteins. The N-terminal methionine is often cleaved when the second residue in the primary sequence is small and uncharged (Met-Ala-, Cys, Gly, Pro, Ser, Thr, or Val). Requires deformylation of the N(alpha)-formylated initiator methionine before it can be hydrolyzed.</text>
</comment>
<comment type="catalytic activity">
    <reaction evidence="1">
        <text>Release of N-terminal amino acids, preferentially methionine, from peptides and arylamides.</text>
        <dbReference type="EC" id="3.4.11.18"/>
    </reaction>
</comment>
<comment type="cofactor">
    <cofactor evidence="1">
        <name>Co(2+)</name>
        <dbReference type="ChEBI" id="CHEBI:48828"/>
    </cofactor>
    <cofactor evidence="1">
        <name>Zn(2+)</name>
        <dbReference type="ChEBI" id="CHEBI:29105"/>
    </cofactor>
    <cofactor evidence="1">
        <name>Mn(2+)</name>
        <dbReference type="ChEBI" id="CHEBI:29035"/>
    </cofactor>
    <cofactor evidence="1">
        <name>Fe(2+)</name>
        <dbReference type="ChEBI" id="CHEBI:29033"/>
    </cofactor>
    <text evidence="1">Binds 2 divalent metal cations per subunit. Has a high-affinity and a low affinity metal-binding site. The true nature of the physiological cofactor is under debate. The enzyme is active with cobalt, zinc, manganese or divalent iron ions. Most likely, methionine aminopeptidases function as mononuclear Fe(2+)-metalloproteases under physiological conditions, and the catalytically relevant metal-binding site has been assigned to the histidine-containing high-affinity site.</text>
</comment>
<comment type="subunit">
    <text evidence="1">Monomer.</text>
</comment>
<comment type="subcellular location">
    <subcellularLocation>
        <location evidence="2">Cytoplasm</location>
    </subcellularLocation>
</comment>
<comment type="induction">
    <text evidence="2">Expressed at very low levels throughout growth.</text>
</comment>
<comment type="mass spectrometry" mass="27209.35" error="2.14" method="Unknown" evidence="2"/>
<comment type="similarity">
    <text evidence="1">Belongs to the peptidase M24A family. Methionine aminopeptidase type 1 subfamily.</text>
</comment>